<feature type="chain" id="PRO_1000051261" description="Small ribosomal subunit protein uS9">
    <location>
        <begin position="1"/>
        <end position="158"/>
    </location>
</feature>
<feature type="region of interest" description="Disordered" evidence="2">
    <location>
        <begin position="1"/>
        <end position="20"/>
    </location>
</feature>
<feature type="compositionally biased region" description="Low complexity" evidence="2">
    <location>
        <begin position="10"/>
        <end position="20"/>
    </location>
</feature>
<organism>
    <name type="scientific">Mycobacterium sp. (strain KMS)</name>
    <dbReference type="NCBI Taxonomy" id="189918"/>
    <lineage>
        <taxon>Bacteria</taxon>
        <taxon>Bacillati</taxon>
        <taxon>Actinomycetota</taxon>
        <taxon>Actinomycetes</taxon>
        <taxon>Mycobacteriales</taxon>
        <taxon>Mycobacteriaceae</taxon>
        <taxon>Mycobacterium</taxon>
    </lineage>
</organism>
<protein>
    <recommendedName>
        <fullName evidence="1">Small ribosomal subunit protein uS9</fullName>
    </recommendedName>
    <alternativeName>
        <fullName evidence="3">30S ribosomal protein S9</fullName>
    </alternativeName>
</protein>
<accession>A1UC03</accession>
<gene>
    <name evidence="1" type="primary">rpsI</name>
    <name type="ordered locus">Mkms_1148</name>
</gene>
<evidence type="ECO:0000255" key="1">
    <source>
        <dbReference type="HAMAP-Rule" id="MF_00532"/>
    </source>
</evidence>
<evidence type="ECO:0000256" key="2">
    <source>
        <dbReference type="SAM" id="MobiDB-lite"/>
    </source>
</evidence>
<evidence type="ECO:0000305" key="3"/>
<proteinExistence type="inferred from homology"/>
<comment type="similarity">
    <text evidence="1">Belongs to the universal ribosomal protein uS9 family.</text>
</comment>
<reference key="1">
    <citation type="submission" date="2006-12" db="EMBL/GenBank/DDBJ databases">
        <title>Complete sequence of chromosome of Mycobacterium sp. KMS.</title>
        <authorList>
            <consortium name="US DOE Joint Genome Institute"/>
            <person name="Copeland A."/>
            <person name="Lucas S."/>
            <person name="Lapidus A."/>
            <person name="Barry K."/>
            <person name="Detter J.C."/>
            <person name="Glavina del Rio T."/>
            <person name="Hammon N."/>
            <person name="Israni S."/>
            <person name="Dalin E."/>
            <person name="Tice H."/>
            <person name="Pitluck S."/>
            <person name="Kiss H."/>
            <person name="Brettin T."/>
            <person name="Bruce D."/>
            <person name="Han C."/>
            <person name="Tapia R."/>
            <person name="Gilna P."/>
            <person name="Schmutz J."/>
            <person name="Larimer F."/>
            <person name="Land M."/>
            <person name="Hauser L."/>
            <person name="Kyrpides N."/>
            <person name="Mikhailova N."/>
            <person name="Miller C.D."/>
            <person name="Richardson P."/>
        </authorList>
    </citation>
    <scope>NUCLEOTIDE SEQUENCE [LARGE SCALE GENOMIC DNA]</scope>
    <source>
        <strain>KMS</strain>
    </source>
</reference>
<name>RS9_MYCSK</name>
<dbReference type="EMBL" id="CP000518">
    <property type="protein sequence ID" value="ABL90361.1"/>
    <property type="molecule type" value="Genomic_DNA"/>
</dbReference>
<dbReference type="SMR" id="A1UC03"/>
<dbReference type="STRING" id="189918.Mkms_1148"/>
<dbReference type="KEGG" id="mkm:Mkms_1148"/>
<dbReference type="HOGENOM" id="CLU_046483_2_0_11"/>
<dbReference type="OrthoDB" id="9803965at2"/>
<dbReference type="GO" id="GO:0005737">
    <property type="term" value="C:cytoplasm"/>
    <property type="evidence" value="ECO:0007669"/>
    <property type="project" value="UniProtKB-ARBA"/>
</dbReference>
<dbReference type="GO" id="GO:0015935">
    <property type="term" value="C:small ribosomal subunit"/>
    <property type="evidence" value="ECO:0007669"/>
    <property type="project" value="TreeGrafter"/>
</dbReference>
<dbReference type="GO" id="GO:0003723">
    <property type="term" value="F:RNA binding"/>
    <property type="evidence" value="ECO:0007669"/>
    <property type="project" value="TreeGrafter"/>
</dbReference>
<dbReference type="GO" id="GO:0003735">
    <property type="term" value="F:structural constituent of ribosome"/>
    <property type="evidence" value="ECO:0007669"/>
    <property type="project" value="InterPro"/>
</dbReference>
<dbReference type="GO" id="GO:0006412">
    <property type="term" value="P:translation"/>
    <property type="evidence" value="ECO:0007669"/>
    <property type="project" value="UniProtKB-UniRule"/>
</dbReference>
<dbReference type="FunFam" id="3.30.230.10:FF:000001">
    <property type="entry name" value="30S ribosomal protein S9"/>
    <property type="match status" value="1"/>
</dbReference>
<dbReference type="Gene3D" id="3.30.230.10">
    <property type="match status" value="1"/>
</dbReference>
<dbReference type="HAMAP" id="MF_00532_B">
    <property type="entry name" value="Ribosomal_uS9_B"/>
    <property type="match status" value="1"/>
</dbReference>
<dbReference type="InterPro" id="IPR020568">
    <property type="entry name" value="Ribosomal_Su5_D2-typ_SF"/>
</dbReference>
<dbReference type="InterPro" id="IPR000754">
    <property type="entry name" value="Ribosomal_uS9"/>
</dbReference>
<dbReference type="InterPro" id="IPR023035">
    <property type="entry name" value="Ribosomal_uS9_bac/plastid"/>
</dbReference>
<dbReference type="InterPro" id="IPR020574">
    <property type="entry name" value="Ribosomal_uS9_CS"/>
</dbReference>
<dbReference type="InterPro" id="IPR014721">
    <property type="entry name" value="Ribsml_uS5_D2-typ_fold_subgr"/>
</dbReference>
<dbReference type="NCBIfam" id="NF001099">
    <property type="entry name" value="PRK00132.1"/>
    <property type="match status" value="1"/>
</dbReference>
<dbReference type="PANTHER" id="PTHR21569">
    <property type="entry name" value="RIBOSOMAL PROTEIN S9"/>
    <property type="match status" value="1"/>
</dbReference>
<dbReference type="PANTHER" id="PTHR21569:SF1">
    <property type="entry name" value="SMALL RIBOSOMAL SUBUNIT PROTEIN US9M"/>
    <property type="match status" value="1"/>
</dbReference>
<dbReference type="Pfam" id="PF00380">
    <property type="entry name" value="Ribosomal_S9"/>
    <property type="match status" value="1"/>
</dbReference>
<dbReference type="SUPFAM" id="SSF54211">
    <property type="entry name" value="Ribosomal protein S5 domain 2-like"/>
    <property type="match status" value="1"/>
</dbReference>
<dbReference type="PROSITE" id="PS00360">
    <property type="entry name" value="RIBOSOMAL_S9"/>
    <property type="match status" value="1"/>
</dbReference>
<keyword id="KW-0687">Ribonucleoprotein</keyword>
<keyword id="KW-0689">Ribosomal protein</keyword>
<sequence>MTEAVETETVEPTTDEATAADVEPREPVYIDRPIQTVGRRKEAVVRVRLVPGTGKFNLDGRTLEAYFPNKVHQQLIKAPLVLVDRLESFDVYAHLDGGGPSGQAGALRLAIARALILVQPEDRPALKKAGFLTRDPRAIERKKYGLKKARKAPQYSKR</sequence>